<sequence length="113" mass="13590">MNIMEIEKTNRMNALFEFYAALLTDKQMNYIELYYADDYSLAEIADEFGVSRQAVYDNIKRTEKILETYEMKLHMYSDYVVRSEIFDDMIAHYPHDEYLQEKISILTSIDNRE</sequence>
<dbReference type="EMBL" id="BA000034">
    <property type="protein sequence ID" value="BAC64137.1"/>
    <property type="molecule type" value="Genomic_DNA"/>
</dbReference>
<dbReference type="SMR" id="P0DG81"/>
<dbReference type="KEGG" id="sps:SPs1042"/>
<dbReference type="HOGENOM" id="CLU_129218_1_1_9"/>
<dbReference type="Gene3D" id="1.10.10.10">
    <property type="entry name" value="Winged helix-like DNA-binding domain superfamily/Winged helix DNA-binding domain"/>
    <property type="match status" value="1"/>
</dbReference>
<dbReference type="HAMAP" id="MF_00245">
    <property type="entry name" value="UPF0122"/>
    <property type="match status" value="1"/>
</dbReference>
<dbReference type="InterPro" id="IPR013324">
    <property type="entry name" value="RNA_pol_sigma_r3/r4-like"/>
</dbReference>
<dbReference type="InterPro" id="IPR007394">
    <property type="entry name" value="UPF0122"/>
</dbReference>
<dbReference type="InterPro" id="IPR054831">
    <property type="entry name" value="UPF0122_fam_protein"/>
</dbReference>
<dbReference type="InterPro" id="IPR036388">
    <property type="entry name" value="WH-like_DNA-bd_sf"/>
</dbReference>
<dbReference type="NCBIfam" id="NF001066">
    <property type="entry name" value="PRK00118.1-1"/>
    <property type="match status" value="1"/>
</dbReference>
<dbReference type="NCBIfam" id="NF001068">
    <property type="entry name" value="PRK00118.1-4"/>
    <property type="match status" value="1"/>
</dbReference>
<dbReference type="NCBIfam" id="NF001070">
    <property type="entry name" value="PRK00118.1-6"/>
    <property type="match status" value="1"/>
</dbReference>
<dbReference type="NCBIfam" id="NF045758">
    <property type="entry name" value="YlxM"/>
    <property type="match status" value="1"/>
</dbReference>
<dbReference type="PANTHER" id="PTHR40083">
    <property type="entry name" value="UPF0122 PROTEIN CBO2450/CLC_2298"/>
    <property type="match status" value="1"/>
</dbReference>
<dbReference type="PANTHER" id="PTHR40083:SF1">
    <property type="entry name" value="UPF0122 PROTEIN YLXM"/>
    <property type="match status" value="1"/>
</dbReference>
<dbReference type="Pfam" id="PF04297">
    <property type="entry name" value="UPF0122"/>
    <property type="match status" value="1"/>
</dbReference>
<dbReference type="SUPFAM" id="SSF88659">
    <property type="entry name" value="Sigma3 and sigma4 domains of RNA polymerase sigma factors"/>
    <property type="match status" value="1"/>
</dbReference>
<protein>
    <recommendedName>
        <fullName>UPF0122 protein SPs1042</fullName>
    </recommendedName>
</protein>
<organism>
    <name type="scientific">Streptococcus pyogenes serotype M3 (strain SSI-1)</name>
    <dbReference type="NCBI Taxonomy" id="193567"/>
    <lineage>
        <taxon>Bacteria</taxon>
        <taxon>Bacillati</taxon>
        <taxon>Bacillota</taxon>
        <taxon>Bacilli</taxon>
        <taxon>Lactobacillales</taxon>
        <taxon>Streptococcaceae</taxon>
        <taxon>Streptococcus</taxon>
    </lineage>
</organism>
<name>Y842_STRPQ</name>
<accession>P0DG81</accession>
<accession>P67254</accession>
<accession>Q99ZK0</accession>
<gene>
    <name type="ordered locus">SPs1042</name>
</gene>
<proteinExistence type="inferred from homology"/>
<comment type="function">
    <text evidence="1">Might take part in the signal recognition particle (SRP) pathway. This is inferred from the conservation of its genetic proximity to ftsY/ffh. May be a regulatory protein (By similarity).</text>
</comment>
<comment type="similarity">
    <text evidence="2">Belongs to the UPF0122 family.</text>
</comment>
<feature type="chain" id="PRO_0000411630" description="UPF0122 protein SPs1042">
    <location>
        <begin position="1"/>
        <end position="113"/>
    </location>
</feature>
<reference key="1">
    <citation type="journal article" date="2003" name="Genome Res.">
        <title>Genome sequence of an M3 strain of Streptococcus pyogenes reveals a large-scale genomic rearrangement in invasive strains and new insights into phage evolution.</title>
        <authorList>
            <person name="Nakagawa I."/>
            <person name="Kurokawa K."/>
            <person name="Yamashita A."/>
            <person name="Nakata M."/>
            <person name="Tomiyasu Y."/>
            <person name="Okahashi N."/>
            <person name="Kawabata S."/>
            <person name="Yamazaki K."/>
            <person name="Shiba T."/>
            <person name="Yasunaga T."/>
            <person name="Hayashi H."/>
            <person name="Hattori M."/>
            <person name="Hamada S."/>
        </authorList>
    </citation>
    <scope>NUCLEOTIDE SEQUENCE [LARGE SCALE GENOMIC DNA]</scope>
    <source>
        <strain>SSI-1</strain>
    </source>
</reference>
<evidence type="ECO:0000250" key="1"/>
<evidence type="ECO:0000305" key="2"/>